<accession>A3NWR9</accession>
<name>RRAAH_BURP0</name>
<feature type="chain" id="PRO_1000013828" description="Putative 4-hydroxy-4-methyl-2-oxoglutarate aldolase">
    <location>
        <begin position="1"/>
        <end position="165"/>
    </location>
</feature>
<feature type="binding site" evidence="1">
    <location>
        <begin position="80"/>
        <end position="83"/>
    </location>
    <ligand>
        <name>substrate</name>
    </ligand>
</feature>
<feature type="binding site" evidence="1">
    <location>
        <position position="102"/>
    </location>
    <ligand>
        <name>substrate</name>
    </ligand>
</feature>
<feature type="binding site" evidence="1">
    <location>
        <position position="103"/>
    </location>
    <ligand>
        <name>a divalent metal cation</name>
        <dbReference type="ChEBI" id="CHEBI:60240"/>
    </ligand>
</feature>
<reference key="1">
    <citation type="journal article" date="2010" name="Genome Biol. Evol.">
        <title>Continuing evolution of Burkholderia mallei through genome reduction and large-scale rearrangements.</title>
        <authorList>
            <person name="Losada L."/>
            <person name="Ronning C.M."/>
            <person name="DeShazer D."/>
            <person name="Woods D."/>
            <person name="Fedorova N."/>
            <person name="Kim H.S."/>
            <person name="Shabalina S.A."/>
            <person name="Pearson T.R."/>
            <person name="Brinkac L."/>
            <person name="Tan P."/>
            <person name="Nandi T."/>
            <person name="Crabtree J."/>
            <person name="Badger J."/>
            <person name="Beckstrom-Sternberg S."/>
            <person name="Saqib M."/>
            <person name="Schutzer S.E."/>
            <person name="Keim P."/>
            <person name="Nierman W.C."/>
        </authorList>
    </citation>
    <scope>NUCLEOTIDE SEQUENCE [LARGE SCALE GENOMIC DNA]</scope>
    <source>
        <strain>1106a</strain>
    </source>
</reference>
<evidence type="ECO:0000250" key="1"/>
<evidence type="ECO:0000305" key="2"/>
<gene>
    <name type="ordered locus">BURPS1106A_2531</name>
</gene>
<keyword id="KW-0456">Lyase</keyword>
<keyword id="KW-0479">Metal-binding</keyword>
<protein>
    <recommendedName>
        <fullName>Putative 4-hydroxy-4-methyl-2-oxoglutarate aldolase</fullName>
        <shortName>HMG aldolase</shortName>
        <ecNumber>4.1.3.17</ecNumber>
    </recommendedName>
    <alternativeName>
        <fullName>Oxaloacetate decarboxylase</fullName>
        <shortName>OAA decarboxylase</shortName>
        <ecNumber>4.1.1.112</ecNumber>
    </alternativeName>
    <alternativeName>
        <fullName>Regulator of ribonuclease activity homolog</fullName>
    </alternativeName>
    <alternativeName>
        <fullName>RraA-like protein</fullName>
    </alternativeName>
</protein>
<dbReference type="EC" id="4.1.3.17"/>
<dbReference type="EC" id="4.1.1.112"/>
<dbReference type="EMBL" id="CP000572">
    <property type="protein sequence ID" value="ABN88867.1"/>
    <property type="molecule type" value="Genomic_DNA"/>
</dbReference>
<dbReference type="SMR" id="A3NWR9"/>
<dbReference type="KEGG" id="bpl:BURPS1106A_2531"/>
<dbReference type="HOGENOM" id="CLU_072626_4_0_4"/>
<dbReference type="Proteomes" id="UP000006738">
    <property type="component" value="Chromosome I"/>
</dbReference>
<dbReference type="GO" id="GO:0047443">
    <property type="term" value="F:4-hydroxy-4-methyl-2-oxoglutarate aldolase activity"/>
    <property type="evidence" value="ECO:0007669"/>
    <property type="project" value="UniProtKB-EC"/>
</dbReference>
<dbReference type="GO" id="GO:0046872">
    <property type="term" value="F:metal ion binding"/>
    <property type="evidence" value="ECO:0007669"/>
    <property type="project" value="UniProtKB-KW"/>
</dbReference>
<dbReference type="GO" id="GO:0008948">
    <property type="term" value="F:oxaloacetate decarboxylase activity"/>
    <property type="evidence" value="ECO:0007669"/>
    <property type="project" value="UniProtKB-EC"/>
</dbReference>
<dbReference type="GO" id="GO:0008428">
    <property type="term" value="F:ribonuclease inhibitor activity"/>
    <property type="evidence" value="ECO:0007669"/>
    <property type="project" value="InterPro"/>
</dbReference>
<dbReference type="GO" id="GO:0051252">
    <property type="term" value="P:regulation of RNA metabolic process"/>
    <property type="evidence" value="ECO:0007669"/>
    <property type="project" value="InterPro"/>
</dbReference>
<dbReference type="CDD" id="cd16841">
    <property type="entry name" value="RraA_family"/>
    <property type="match status" value="1"/>
</dbReference>
<dbReference type="Gene3D" id="3.50.30.40">
    <property type="entry name" value="Ribonuclease E inhibitor RraA/RraA-like"/>
    <property type="match status" value="1"/>
</dbReference>
<dbReference type="InterPro" id="IPR010203">
    <property type="entry name" value="RraA"/>
</dbReference>
<dbReference type="InterPro" id="IPR005493">
    <property type="entry name" value="RraA/RraA-like"/>
</dbReference>
<dbReference type="InterPro" id="IPR036704">
    <property type="entry name" value="RraA/RraA-like_sf"/>
</dbReference>
<dbReference type="NCBIfam" id="TIGR01935">
    <property type="entry name" value="NOT-MenG"/>
    <property type="match status" value="1"/>
</dbReference>
<dbReference type="NCBIfam" id="NF006875">
    <property type="entry name" value="PRK09372.1"/>
    <property type="match status" value="1"/>
</dbReference>
<dbReference type="PANTHER" id="PTHR33254">
    <property type="entry name" value="4-HYDROXY-4-METHYL-2-OXOGLUTARATE ALDOLASE 3-RELATED"/>
    <property type="match status" value="1"/>
</dbReference>
<dbReference type="PANTHER" id="PTHR33254:SF4">
    <property type="entry name" value="4-HYDROXY-4-METHYL-2-OXOGLUTARATE ALDOLASE 3-RELATED"/>
    <property type="match status" value="1"/>
</dbReference>
<dbReference type="Pfam" id="PF03737">
    <property type="entry name" value="RraA-like"/>
    <property type="match status" value="1"/>
</dbReference>
<dbReference type="SUPFAM" id="SSF89562">
    <property type="entry name" value="RraA-like"/>
    <property type="match status" value="1"/>
</dbReference>
<sequence length="165" mass="17301">MMFATTDLCDAHEDRLAAGTLRVLEPVFRPFGGVRRFAGPAATLKLFEDNSLVRTALEQDGAGRVLVVDGGGSLRCALVGGNLGKLAEKNGWAGIVVNGCVRDSDELAECRVGVLALAAHPRKSDKRGAGVSDAPVDVRGTRIVPGDWIYADADGVLVSDDALLE</sequence>
<comment type="function">
    <text evidence="1">Catalyzes the aldol cleavage of 4-hydroxy-4-methyl-2-oxoglutarate (HMG) into 2 molecules of pyruvate. Also contains a secondary oxaloacetate (OAA) decarboxylase activity due to the common pyruvate enolate transition state formed following C-C bond cleavage in the retro-aldol and decarboxylation reactions (By similarity).</text>
</comment>
<comment type="catalytic activity">
    <reaction>
        <text>4-hydroxy-4-methyl-2-oxoglutarate = 2 pyruvate</text>
        <dbReference type="Rhea" id="RHEA:22748"/>
        <dbReference type="ChEBI" id="CHEBI:15361"/>
        <dbReference type="ChEBI" id="CHEBI:58276"/>
        <dbReference type="EC" id="4.1.3.17"/>
    </reaction>
</comment>
<comment type="catalytic activity">
    <reaction>
        <text>oxaloacetate + H(+) = pyruvate + CO2</text>
        <dbReference type="Rhea" id="RHEA:15641"/>
        <dbReference type="ChEBI" id="CHEBI:15361"/>
        <dbReference type="ChEBI" id="CHEBI:15378"/>
        <dbReference type="ChEBI" id="CHEBI:16452"/>
        <dbReference type="ChEBI" id="CHEBI:16526"/>
        <dbReference type="EC" id="4.1.1.112"/>
    </reaction>
</comment>
<comment type="cofactor">
    <cofactor evidence="1">
        <name>a divalent metal cation</name>
        <dbReference type="ChEBI" id="CHEBI:60240"/>
    </cofactor>
    <text evidence="1">Divalent metal cation.</text>
</comment>
<comment type="subunit">
    <text evidence="1">Homotrimer.</text>
</comment>
<comment type="similarity">
    <text evidence="2">Belongs to the class II aldolase/RraA-like family.</text>
</comment>
<proteinExistence type="inferred from homology"/>
<organism>
    <name type="scientific">Burkholderia pseudomallei (strain 1106a)</name>
    <dbReference type="NCBI Taxonomy" id="357348"/>
    <lineage>
        <taxon>Bacteria</taxon>
        <taxon>Pseudomonadati</taxon>
        <taxon>Pseudomonadota</taxon>
        <taxon>Betaproteobacteria</taxon>
        <taxon>Burkholderiales</taxon>
        <taxon>Burkholderiaceae</taxon>
        <taxon>Burkholderia</taxon>
        <taxon>pseudomallei group</taxon>
    </lineage>
</organism>